<sequence length="165" mass="17977">MSATAEQNARNPKGKGGFARTVSQRKRKRLFLIGGALAVLAVAVGLMLTAFNQDIRFFRTPADLTEQDMTSGARFRLGGLVEEGSVSRTGSELRFTVTDTIKTVKVVFEGIPPDLFREGQGVVAEGRFGSDGLFRADNVLAKHDENYVPKDLADSLKKKGVWEGK</sequence>
<keyword id="KW-0997">Cell inner membrane</keyword>
<keyword id="KW-1003">Cell membrane</keyword>
<keyword id="KW-0201">Cytochrome c-type biogenesis</keyword>
<keyword id="KW-0349">Heme</keyword>
<keyword id="KW-0408">Iron</keyword>
<keyword id="KW-0472">Membrane</keyword>
<keyword id="KW-0479">Metal-binding</keyword>
<keyword id="KW-0735">Signal-anchor</keyword>
<keyword id="KW-0812">Transmembrane</keyword>
<keyword id="KW-1133">Transmembrane helix</keyword>
<proteinExistence type="inferred from homology"/>
<reference key="1">
    <citation type="journal article" date="2002" name="Proc. Natl. Acad. Sci. U.S.A.">
        <title>The Brucella suis genome reveals fundamental similarities between animal and plant pathogens and symbionts.</title>
        <authorList>
            <person name="Paulsen I.T."/>
            <person name="Seshadri R."/>
            <person name="Nelson K.E."/>
            <person name="Eisen J.A."/>
            <person name="Heidelberg J.F."/>
            <person name="Read T.D."/>
            <person name="Dodson R.J."/>
            <person name="Umayam L.A."/>
            <person name="Brinkac L.M."/>
            <person name="Beanan M.J."/>
            <person name="Daugherty S.C."/>
            <person name="DeBoy R.T."/>
            <person name="Durkin A.S."/>
            <person name="Kolonay J.F."/>
            <person name="Madupu R."/>
            <person name="Nelson W.C."/>
            <person name="Ayodeji B."/>
            <person name="Kraul M."/>
            <person name="Shetty J."/>
            <person name="Malek J.A."/>
            <person name="Van Aken S.E."/>
            <person name="Riedmuller S."/>
            <person name="Tettelin H."/>
            <person name="Gill S.R."/>
            <person name="White O."/>
            <person name="Salzberg S.L."/>
            <person name="Hoover D.L."/>
            <person name="Lindler L.E."/>
            <person name="Halling S.M."/>
            <person name="Boyle S.M."/>
            <person name="Fraser C.M."/>
        </authorList>
    </citation>
    <scope>NUCLEOTIDE SEQUENCE [LARGE SCALE GENOMIC DNA]</scope>
    <source>
        <strain>1330</strain>
    </source>
</reference>
<reference key="2">
    <citation type="journal article" date="2011" name="J. Bacteriol.">
        <title>Revised genome sequence of Brucella suis 1330.</title>
        <authorList>
            <person name="Tae H."/>
            <person name="Shallom S."/>
            <person name="Settlage R."/>
            <person name="Preston D."/>
            <person name="Adams L.G."/>
            <person name="Garner H.R."/>
        </authorList>
    </citation>
    <scope>NUCLEOTIDE SEQUENCE [LARGE SCALE GENOMIC DNA]</scope>
    <source>
        <strain>1330</strain>
    </source>
</reference>
<protein>
    <recommendedName>
        <fullName evidence="1">Cytochrome c-type biogenesis protein CcmE</fullName>
    </recommendedName>
    <alternativeName>
        <fullName evidence="1">Cytochrome c maturation protein E</fullName>
    </alternativeName>
    <alternativeName>
        <fullName evidence="1">Heme chaperone CcmE</fullName>
    </alternativeName>
</protein>
<organism>
    <name type="scientific">Brucella suis biovar 1 (strain 1330)</name>
    <dbReference type="NCBI Taxonomy" id="204722"/>
    <lineage>
        <taxon>Bacteria</taxon>
        <taxon>Pseudomonadati</taxon>
        <taxon>Pseudomonadota</taxon>
        <taxon>Alphaproteobacteria</taxon>
        <taxon>Hyphomicrobiales</taxon>
        <taxon>Brucellaceae</taxon>
        <taxon>Brucella/Ochrobactrum group</taxon>
        <taxon>Brucella</taxon>
    </lineage>
</organism>
<feature type="chain" id="PRO_0000238801" description="Cytochrome c-type biogenesis protein CcmE">
    <location>
        <begin position="1"/>
        <end position="165"/>
    </location>
</feature>
<feature type="topological domain" description="Cytoplasmic" evidence="1">
    <location>
        <begin position="1"/>
        <end position="29"/>
    </location>
</feature>
<feature type="transmembrane region" description="Helical; Signal-anchor for type II membrane protein" evidence="1">
    <location>
        <begin position="30"/>
        <end position="50"/>
    </location>
</feature>
<feature type="topological domain" description="Periplasmic" evidence="1">
    <location>
        <begin position="51"/>
        <end position="165"/>
    </location>
</feature>
<feature type="binding site" description="covalent" evidence="1">
    <location>
        <position position="143"/>
    </location>
    <ligand>
        <name>heme</name>
        <dbReference type="ChEBI" id="CHEBI:30413"/>
    </ligand>
</feature>
<feature type="binding site" description="axial binding residue" evidence="1">
    <location>
        <position position="147"/>
    </location>
    <ligand>
        <name>heme</name>
        <dbReference type="ChEBI" id="CHEBI:30413"/>
    </ligand>
    <ligandPart>
        <name>Fe</name>
        <dbReference type="ChEBI" id="CHEBI:18248"/>
    </ligandPart>
</feature>
<gene>
    <name evidence="1" type="primary">ccmE</name>
    <name evidence="1" type="synonym">cycJ</name>
    <name type="ordered locus">BR0608</name>
    <name type="ordered locus">BS1330_I0604</name>
</gene>
<comment type="function">
    <text evidence="1">Heme chaperone required for the biogenesis of c-type cytochromes. Transiently binds heme delivered by CcmC and transfers the heme to apo-cytochromes in a process facilitated by CcmF and CcmH.</text>
</comment>
<comment type="subcellular location">
    <subcellularLocation>
        <location evidence="1">Cell inner membrane</location>
        <topology evidence="1">Single-pass type II membrane protein</topology>
        <orientation evidence="1">Periplasmic side</orientation>
    </subcellularLocation>
</comment>
<comment type="similarity">
    <text evidence="1">Belongs to the CcmE/CycJ family.</text>
</comment>
<dbReference type="EMBL" id="AE014291">
    <property type="protein sequence ID" value="AAN29537.1"/>
    <property type="molecule type" value="Genomic_DNA"/>
</dbReference>
<dbReference type="EMBL" id="CP002997">
    <property type="protein sequence ID" value="AEM17954.1"/>
    <property type="molecule type" value="Genomic_DNA"/>
</dbReference>
<dbReference type="PIR" id="AG3418">
    <property type="entry name" value="AG3418"/>
</dbReference>
<dbReference type="RefSeq" id="WP_002963757.1">
    <property type="nucleotide sequence ID" value="NZ_KN046804.1"/>
</dbReference>
<dbReference type="SMR" id="Q8G1U5"/>
<dbReference type="GeneID" id="97534052"/>
<dbReference type="KEGG" id="bms:BR0608"/>
<dbReference type="KEGG" id="bsi:BS1330_I0604"/>
<dbReference type="PATRIC" id="fig|204722.21.peg.2050"/>
<dbReference type="HOGENOM" id="CLU_079503_1_1_5"/>
<dbReference type="PhylomeDB" id="Q8G1U5"/>
<dbReference type="Proteomes" id="UP000007104">
    <property type="component" value="Chromosome I"/>
</dbReference>
<dbReference type="GO" id="GO:0005886">
    <property type="term" value="C:plasma membrane"/>
    <property type="evidence" value="ECO:0007669"/>
    <property type="project" value="UniProtKB-SubCell"/>
</dbReference>
<dbReference type="GO" id="GO:0020037">
    <property type="term" value="F:heme binding"/>
    <property type="evidence" value="ECO:0007669"/>
    <property type="project" value="InterPro"/>
</dbReference>
<dbReference type="GO" id="GO:0046872">
    <property type="term" value="F:metal ion binding"/>
    <property type="evidence" value="ECO:0007669"/>
    <property type="project" value="UniProtKB-KW"/>
</dbReference>
<dbReference type="GO" id="GO:0017004">
    <property type="term" value="P:cytochrome complex assembly"/>
    <property type="evidence" value="ECO:0007669"/>
    <property type="project" value="UniProtKB-KW"/>
</dbReference>
<dbReference type="Gene3D" id="2.40.50.140">
    <property type="entry name" value="Nucleic acid-binding proteins"/>
    <property type="match status" value="1"/>
</dbReference>
<dbReference type="HAMAP" id="MF_01959">
    <property type="entry name" value="CcmE"/>
    <property type="match status" value="1"/>
</dbReference>
<dbReference type="InterPro" id="IPR004329">
    <property type="entry name" value="CcmE"/>
</dbReference>
<dbReference type="InterPro" id="IPR036127">
    <property type="entry name" value="CcmE-like_sf"/>
</dbReference>
<dbReference type="InterPro" id="IPR012340">
    <property type="entry name" value="NA-bd_OB-fold"/>
</dbReference>
<dbReference type="NCBIfam" id="NF009727">
    <property type="entry name" value="PRK13254.1-1"/>
    <property type="match status" value="1"/>
</dbReference>
<dbReference type="NCBIfam" id="NF009730">
    <property type="entry name" value="PRK13254.1-4"/>
    <property type="match status" value="1"/>
</dbReference>
<dbReference type="NCBIfam" id="NF009731">
    <property type="entry name" value="PRK13254.1-5"/>
    <property type="match status" value="1"/>
</dbReference>
<dbReference type="PANTHER" id="PTHR34128">
    <property type="entry name" value="CYTOCHROME C-TYPE BIOGENESIS PROTEIN CCME HOMOLOG, MITOCHONDRIAL"/>
    <property type="match status" value="1"/>
</dbReference>
<dbReference type="PANTHER" id="PTHR34128:SF2">
    <property type="entry name" value="CYTOCHROME C-TYPE BIOGENESIS PROTEIN CCME HOMOLOG, MITOCHONDRIAL"/>
    <property type="match status" value="1"/>
</dbReference>
<dbReference type="Pfam" id="PF03100">
    <property type="entry name" value="CcmE"/>
    <property type="match status" value="1"/>
</dbReference>
<dbReference type="SUPFAM" id="SSF82093">
    <property type="entry name" value="Heme chaperone CcmE"/>
    <property type="match status" value="1"/>
</dbReference>
<accession>Q8G1U5</accession>
<accession>G0K7M6</accession>
<name>CCME_BRUSU</name>
<evidence type="ECO:0000255" key="1">
    <source>
        <dbReference type="HAMAP-Rule" id="MF_01959"/>
    </source>
</evidence>